<protein>
    <recommendedName>
        <fullName evidence="1">4-hydroxy-2-oxovalerate aldolase 1</fullName>
        <shortName evidence="1">HOA 1</shortName>
        <ecNumber evidence="1">4.1.3.39</ecNumber>
    </recommendedName>
    <alternativeName>
        <fullName evidence="1">4-hydroxy-2-keto-pentanoic acid aldolase 1</fullName>
    </alternativeName>
    <alternativeName>
        <fullName evidence="1">4-hydroxy-2-oxopentanoate aldolase 1</fullName>
    </alternativeName>
</protein>
<reference key="1">
    <citation type="submission" date="2006-12" db="EMBL/GenBank/DDBJ databases">
        <title>Complete sequence of chromosome of Mycobacterium sp. KMS.</title>
        <authorList>
            <consortium name="US DOE Joint Genome Institute"/>
            <person name="Copeland A."/>
            <person name="Lucas S."/>
            <person name="Lapidus A."/>
            <person name="Barry K."/>
            <person name="Detter J.C."/>
            <person name="Glavina del Rio T."/>
            <person name="Hammon N."/>
            <person name="Israni S."/>
            <person name="Dalin E."/>
            <person name="Tice H."/>
            <person name="Pitluck S."/>
            <person name="Kiss H."/>
            <person name="Brettin T."/>
            <person name="Bruce D."/>
            <person name="Han C."/>
            <person name="Tapia R."/>
            <person name="Gilna P."/>
            <person name="Schmutz J."/>
            <person name="Larimer F."/>
            <person name="Land M."/>
            <person name="Hauser L."/>
            <person name="Kyrpides N."/>
            <person name="Mikhailova N."/>
            <person name="Miller C.D."/>
            <person name="Richardson P."/>
        </authorList>
    </citation>
    <scope>NUCLEOTIDE SEQUENCE [LARGE SCALE GENOMIC DNA]</scope>
    <source>
        <strain>KMS</strain>
    </source>
</reference>
<feature type="chain" id="PRO_0000387858" description="4-hydroxy-2-oxovalerate aldolase 1">
    <location>
        <begin position="1"/>
        <end position="353"/>
    </location>
</feature>
<feature type="domain" description="Pyruvate carboxyltransferase" evidence="1">
    <location>
        <begin position="14"/>
        <end position="266"/>
    </location>
</feature>
<feature type="active site" description="Proton acceptor" evidence="1">
    <location>
        <position position="26"/>
    </location>
</feature>
<feature type="binding site" evidence="1">
    <location>
        <begin position="22"/>
        <end position="23"/>
    </location>
    <ligand>
        <name>substrate</name>
    </ligand>
</feature>
<feature type="binding site" evidence="1">
    <location>
        <position position="23"/>
    </location>
    <ligand>
        <name>Mn(2+)</name>
        <dbReference type="ChEBI" id="CHEBI:29035"/>
    </ligand>
</feature>
<feature type="binding site" evidence="1">
    <location>
        <position position="176"/>
    </location>
    <ligand>
        <name>substrate</name>
    </ligand>
</feature>
<feature type="binding site" evidence="1">
    <location>
        <position position="205"/>
    </location>
    <ligand>
        <name>Mn(2+)</name>
        <dbReference type="ChEBI" id="CHEBI:29035"/>
    </ligand>
</feature>
<feature type="binding site" evidence="1">
    <location>
        <position position="205"/>
    </location>
    <ligand>
        <name>substrate</name>
    </ligand>
</feature>
<feature type="binding site" evidence="1">
    <location>
        <position position="207"/>
    </location>
    <ligand>
        <name>Mn(2+)</name>
        <dbReference type="ChEBI" id="CHEBI:29035"/>
    </ligand>
</feature>
<feature type="binding site" evidence="1">
    <location>
        <position position="296"/>
    </location>
    <ligand>
        <name>substrate</name>
    </ligand>
</feature>
<feature type="site" description="Transition state stabilizer" evidence="1">
    <location>
        <position position="22"/>
    </location>
</feature>
<gene>
    <name type="ordered locus">Mkms_4747</name>
</gene>
<comment type="catalytic activity">
    <reaction evidence="1">
        <text>(S)-4-hydroxy-2-oxopentanoate = acetaldehyde + pyruvate</text>
        <dbReference type="Rhea" id="RHEA:22624"/>
        <dbReference type="ChEBI" id="CHEBI:15343"/>
        <dbReference type="ChEBI" id="CHEBI:15361"/>
        <dbReference type="ChEBI" id="CHEBI:73143"/>
        <dbReference type="EC" id="4.1.3.39"/>
    </reaction>
</comment>
<comment type="similarity">
    <text evidence="1">Belongs to the 4-hydroxy-2-oxovalerate aldolase family.</text>
</comment>
<name>HOA1_MYCSK</name>
<accession>A1UM80</accession>
<keyword id="KW-0058">Aromatic hydrocarbons catabolism</keyword>
<keyword id="KW-0456">Lyase</keyword>
<keyword id="KW-0464">Manganese</keyword>
<keyword id="KW-0479">Metal-binding</keyword>
<evidence type="ECO:0000255" key="1">
    <source>
        <dbReference type="HAMAP-Rule" id="MF_01656"/>
    </source>
</evidence>
<organism>
    <name type="scientific">Mycobacterium sp. (strain KMS)</name>
    <dbReference type="NCBI Taxonomy" id="189918"/>
    <lineage>
        <taxon>Bacteria</taxon>
        <taxon>Bacillati</taxon>
        <taxon>Actinomycetota</taxon>
        <taxon>Actinomycetes</taxon>
        <taxon>Mycobacteriales</taxon>
        <taxon>Mycobacteriaceae</taxon>
        <taxon>Mycobacterium</taxon>
    </lineage>
</organism>
<proteinExistence type="inferred from homology"/>
<dbReference type="EC" id="4.1.3.39" evidence="1"/>
<dbReference type="EMBL" id="CP000518">
    <property type="protein sequence ID" value="ABL93938.1"/>
    <property type="molecule type" value="Genomic_DNA"/>
</dbReference>
<dbReference type="SMR" id="A1UM80"/>
<dbReference type="STRING" id="189918.Mkms_4747"/>
<dbReference type="KEGG" id="mkm:Mkms_4747"/>
<dbReference type="HOGENOM" id="CLU_049173_0_0_11"/>
<dbReference type="OrthoDB" id="9803573at2"/>
<dbReference type="GO" id="GO:0003852">
    <property type="term" value="F:2-isopropylmalate synthase activity"/>
    <property type="evidence" value="ECO:0007669"/>
    <property type="project" value="TreeGrafter"/>
</dbReference>
<dbReference type="GO" id="GO:0008701">
    <property type="term" value="F:4-hydroxy-2-oxovalerate aldolase activity"/>
    <property type="evidence" value="ECO:0007669"/>
    <property type="project" value="UniProtKB-UniRule"/>
</dbReference>
<dbReference type="GO" id="GO:0030145">
    <property type="term" value="F:manganese ion binding"/>
    <property type="evidence" value="ECO:0007669"/>
    <property type="project" value="UniProtKB-UniRule"/>
</dbReference>
<dbReference type="GO" id="GO:0009056">
    <property type="term" value="P:catabolic process"/>
    <property type="evidence" value="ECO:0007669"/>
    <property type="project" value="UniProtKB-KW"/>
</dbReference>
<dbReference type="GO" id="GO:0009098">
    <property type="term" value="P:L-leucine biosynthetic process"/>
    <property type="evidence" value="ECO:0007669"/>
    <property type="project" value="TreeGrafter"/>
</dbReference>
<dbReference type="CDD" id="cd07943">
    <property type="entry name" value="DRE_TIM_HOA"/>
    <property type="match status" value="1"/>
</dbReference>
<dbReference type="FunFam" id="3.20.20.70:FF:000072">
    <property type="entry name" value="4-hydroxy-2-oxovalerate aldolase"/>
    <property type="match status" value="1"/>
</dbReference>
<dbReference type="Gene3D" id="1.10.8.60">
    <property type="match status" value="1"/>
</dbReference>
<dbReference type="Gene3D" id="3.20.20.70">
    <property type="entry name" value="Aldolase class I"/>
    <property type="match status" value="1"/>
</dbReference>
<dbReference type="HAMAP" id="MF_01656">
    <property type="entry name" value="HOA"/>
    <property type="match status" value="1"/>
</dbReference>
<dbReference type="InterPro" id="IPR050073">
    <property type="entry name" value="2-IPM_HCS-like"/>
</dbReference>
<dbReference type="InterPro" id="IPR017629">
    <property type="entry name" value="4OH_2_O-val_aldolase"/>
</dbReference>
<dbReference type="InterPro" id="IPR013785">
    <property type="entry name" value="Aldolase_TIM"/>
</dbReference>
<dbReference type="InterPro" id="IPR012425">
    <property type="entry name" value="DmpG_comm"/>
</dbReference>
<dbReference type="InterPro" id="IPR035685">
    <property type="entry name" value="DRE_TIM_HOA"/>
</dbReference>
<dbReference type="InterPro" id="IPR000891">
    <property type="entry name" value="PYR_CT"/>
</dbReference>
<dbReference type="NCBIfam" id="TIGR03217">
    <property type="entry name" value="4OH_2_O_val_ald"/>
    <property type="match status" value="1"/>
</dbReference>
<dbReference type="NCBIfam" id="NF006049">
    <property type="entry name" value="PRK08195.1"/>
    <property type="match status" value="1"/>
</dbReference>
<dbReference type="PANTHER" id="PTHR10277:SF9">
    <property type="entry name" value="2-ISOPROPYLMALATE SYNTHASE 1, CHLOROPLASTIC-RELATED"/>
    <property type="match status" value="1"/>
</dbReference>
<dbReference type="PANTHER" id="PTHR10277">
    <property type="entry name" value="HOMOCITRATE SYNTHASE-RELATED"/>
    <property type="match status" value="1"/>
</dbReference>
<dbReference type="Pfam" id="PF07836">
    <property type="entry name" value="DmpG_comm"/>
    <property type="match status" value="1"/>
</dbReference>
<dbReference type="Pfam" id="PF00682">
    <property type="entry name" value="HMGL-like"/>
    <property type="match status" value="1"/>
</dbReference>
<dbReference type="SUPFAM" id="SSF51569">
    <property type="entry name" value="Aldolase"/>
    <property type="match status" value="1"/>
</dbReference>
<dbReference type="SUPFAM" id="SSF89000">
    <property type="entry name" value="post-HMGL domain-like"/>
    <property type="match status" value="1"/>
</dbReference>
<dbReference type="PROSITE" id="PS50991">
    <property type="entry name" value="PYR_CT"/>
    <property type="match status" value="1"/>
</dbReference>
<sequence length="353" mass="37601">MSTKDIFFNPIWDVRMTDTSLRDGSHHKRHQFTKDEVGAIVAALDTAGVPVIEVTHGDGLGGSSFNYGFSKTPEQELIKLAAETAKEAKIAFLMLPGVGTKEDIKEAQNNGGSICRIATHCTEADVSIQHFGLARELGLETVGFLMMSHTIPPEKLAQQARIMADAGCQCVYVVDSAGALVLEGVRDRVAALVAELGDDAQVGFHGHENLGLGVANSVEAVRAGAKQIDGSCRRFGAGAGNAPVEALIGVFDKIGVKTGIDFFDIADAAEEVVAPAMPAECLLDRNALIMGYSGVYSSFLKHAIRQSERYGVPAHQLLHRAGQRKLIGGQEDQLIDIALEIKREQDSGATAAH</sequence>